<organism>
    <name type="scientific">Mycobacterium tuberculosis (strain ATCC 25618 / H37Rv)</name>
    <dbReference type="NCBI Taxonomy" id="83332"/>
    <lineage>
        <taxon>Bacteria</taxon>
        <taxon>Bacillati</taxon>
        <taxon>Actinomycetota</taxon>
        <taxon>Actinomycetes</taxon>
        <taxon>Mycobacteriales</taxon>
        <taxon>Mycobacteriaceae</taxon>
        <taxon>Mycobacterium</taxon>
        <taxon>Mycobacterium tuberculosis complex</taxon>
    </lineage>
</organism>
<name>AHPE_MYCTU</name>
<comment type="function">
    <text evidence="3 4">Thiol-specific peroxidase that catalyzes the reduction of hydrogen peroxide and organic hydroperoxides to water and alcohols, respectively. Plays a role in cell protection against oxidative stress by detoxifying peroxides. May represent an important antioxidant defense against cytotoxic peroxides, especially peroxynitrite, which can be formed by activated macrophages during infection.</text>
</comment>
<comment type="catalytic activity">
    <reaction evidence="3">
        <text>[mycoredoxin]-L-dithiol + a hydroperoxide = [mycoredoxin]-L-disulfide + an alcohol + H2O</text>
        <dbReference type="Rhea" id="RHEA:62640"/>
        <dbReference type="Rhea" id="RHEA-COMP:16137"/>
        <dbReference type="Rhea" id="RHEA-COMP:16138"/>
        <dbReference type="ChEBI" id="CHEBI:15377"/>
        <dbReference type="ChEBI" id="CHEBI:29950"/>
        <dbReference type="ChEBI" id="CHEBI:30879"/>
        <dbReference type="ChEBI" id="CHEBI:35924"/>
        <dbReference type="ChEBI" id="CHEBI:50058"/>
        <dbReference type="EC" id="1.11.1.29"/>
    </reaction>
</comment>
<comment type="subunit">
    <text evidence="2 3 5">Homodimer (PubMed:19737009, PubMed:27417938). Forms both dimers and octamers; a tightly-associated dimer and a ring-like octamer (PubMed:15701515).</text>
</comment>
<comment type="miscellaneous">
    <text evidence="8 9">The active site is a conserved redox-active cysteine residue, the peroxidatic cysteine (C(P)), which makes the nucleophilic attack on the peroxide substrate. The peroxide oxidizes the C(P)-SH to cysteine sulfenic acid (C(P)-SOH), which then reacts with another cysteine residue, the resolving cysteine (C(R)), to form a disulfide bridge. The disulfide is subsequently reduced by an appropriate electron donor to complete the catalytic cycle. In this 1-Cys peroxiredoxin, no C(R) is present and C(P) instead forms a disulfide with a cysteine from another protein or with a small thiol molecule. C(P) can be reduced through a mixed disulfide with the N-terminal cysteine of mycoredoxin-1 (Mrx1), resolved by its C-terminal cysteine, or by a mixed disulfide with mycothiol, resolved by a second molecule of mycothiol or by mycoredoxin-1.</text>
</comment>
<comment type="similarity">
    <text evidence="6">Belongs to the peroxiredoxin family. AhpE subfamily.</text>
</comment>
<protein>
    <recommendedName>
        <fullName>Alkyl hydroperoxide reductase E</fullName>
        <ecNumber evidence="3">1.11.1.29</ecNumber>
    </recommendedName>
    <alternativeName>
        <fullName evidence="6">Mycoredoxin-dependent peroxiredoxin</fullName>
    </alternativeName>
    <alternativeName>
        <fullName>Peroxiredoxin AhpE</fullName>
        <shortName>Prx</shortName>
    </alternativeName>
    <alternativeName>
        <fullName>Thioredoxin peroxidase</fullName>
        <shortName>TPx</shortName>
    </alternativeName>
</protein>
<dbReference type="EC" id="1.11.1.29" evidence="3"/>
<dbReference type="EMBL" id="AL123456">
    <property type="protein sequence ID" value="CCP45018.1"/>
    <property type="molecule type" value="Genomic_DNA"/>
</dbReference>
<dbReference type="PIR" id="B70778">
    <property type="entry name" value="B70778"/>
</dbReference>
<dbReference type="RefSeq" id="NP_216754.1">
    <property type="nucleotide sequence ID" value="NC_000962.3"/>
</dbReference>
<dbReference type="RefSeq" id="WP_003411527.1">
    <property type="nucleotide sequence ID" value="NZ_NVQJ01000008.1"/>
</dbReference>
<dbReference type="PDB" id="1XVW">
    <property type="method" value="X-ray"/>
    <property type="resolution" value="1.90 A"/>
    <property type="chains" value="A/B=1-153"/>
</dbReference>
<dbReference type="PDB" id="1XXU">
    <property type="method" value="X-ray"/>
    <property type="resolution" value="1.90 A"/>
    <property type="chains" value="A/B/C/D=1-153"/>
</dbReference>
<dbReference type="PDB" id="4X0X">
    <property type="method" value="X-ray"/>
    <property type="resolution" value="1.90 A"/>
    <property type="chains" value="A/B/C/D=1-153"/>
</dbReference>
<dbReference type="PDB" id="4X1U">
    <property type="method" value="X-ray"/>
    <property type="resolution" value="1.87 A"/>
    <property type="chains" value="A/B=1-152"/>
</dbReference>
<dbReference type="PDB" id="4XIH">
    <property type="method" value="X-ray"/>
    <property type="resolution" value="2.25 A"/>
    <property type="chains" value="A/B=1-152"/>
</dbReference>
<dbReference type="PDB" id="5C04">
    <property type="method" value="X-ray"/>
    <property type="resolution" value="1.45 A"/>
    <property type="chains" value="A/B=1-152"/>
</dbReference>
<dbReference type="PDB" id="5ID2">
    <property type="method" value="X-ray"/>
    <property type="resolution" value="2.43 A"/>
    <property type="chains" value="A/B/C/D=1-153"/>
</dbReference>
<dbReference type="PDBsum" id="1XVW"/>
<dbReference type="PDBsum" id="1XXU"/>
<dbReference type="PDBsum" id="4X0X"/>
<dbReference type="PDBsum" id="4X1U"/>
<dbReference type="PDBsum" id="4XIH"/>
<dbReference type="PDBsum" id="5C04"/>
<dbReference type="PDBsum" id="5ID2"/>
<dbReference type="SMR" id="P9WIE3"/>
<dbReference type="STRING" id="83332.Rv2238c"/>
<dbReference type="PaxDb" id="83332-Rv2238c"/>
<dbReference type="GeneID" id="45426218"/>
<dbReference type="GeneID" id="887871"/>
<dbReference type="KEGG" id="mtu:Rv2238c"/>
<dbReference type="KEGG" id="mtv:RVBD_2238c"/>
<dbReference type="TubercuList" id="Rv2238c"/>
<dbReference type="eggNOG" id="COG1225">
    <property type="taxonomic scope" value="Bacteria"/>
</dbReference>
<dbReference type="InParanoid" id="P9WIE3"/>
<dbReference type="OrthoDB" id="9812811at2"/>
<dbReference type="PhylomeDB" id="P9WIE3"/>
<dbReference type="BRENDA" id="1.11.1.29">
    <property type="organism ID" value="3445"/>
</dbReference>
<dbReference type="Reactome" id="R-HSA-1222538">
    <property type="pathway name" value="Tolerance by Mtb to nitric oxide produced by macrophages"/>
</dbReference>
<dbReference type="EvolutionaryTrace" id="P9WIE3"/>
<dbReference type="Proteomes" id="UP000001584">
    <property type="component" value="Chromosome"/>
</dbReference>
<dbReference type="GO" id="GO:0005737">
    <property type="term" value="C:cytoplasm"/>
    <property type="evidence" value="ECO:0000318"/>
    <property type="project" value="GO_Central"/>
</dbReference>
<dbReference type="GO" id="GO:0005829">
    <property type="term" value="C:cytosol"/>
    <property type="evidence" value="ECO:0000304"/>
    <property type="project" value="Reactome"/>
</dbReference>
<dbReference type="GO" id="GO:0004601">
    <property type="term" value="F:peroxidase activity"/>
    <property type="evidence" value="ECO:0000314"/>
    <property type="project" value="MTBBASE"/>
</dbReference>
<dbReference type="GO" id="GO:0051920">
    <property type="term" value="F:peroxiredoxin activity"/>
    <property type="evidence" value="ECO:0000314"/>
    <property type="project" value="MTBBASE"/>
</dbReference>
<dbReference type="GO" id="GO:0008379">
    <property type="term" value="F:thioredoxin peroxidase activity"/>
    <property type="evidence" value="ECO:0000318"/>
    <property type="project" value="GO_Central"/>
</dbReference>
<dbReference type="GO" id="GO:0045454">
    <property type="term" value="P:cell redox homeostasis"/>
    <property type="evidence" value="ECO:0000318"/>
    <property type="project" value="GO_Central"/>
</dbReference>
<dbReference type="GO" id="GO:0034599">
    <property type="term" value="P:cellular response to oxidative stress"/>
    <property type="evidence" value="ECO:0000318"/>
    <property type="project" value="GO_Central"/>
</dbReference>
<dbReference type="GO" id="GO:0051409">
    <property type="term" value="P:response to nitrosative stress"/>
    <property type="evidence" value="ECO:0000314"/>
    <property type="project" value="MTBBASE"/>
</dbReference>
<dbReference type="CDD" id="cd03018">
    <property type="entry name" value="PRX_AhpE_like"/>
    <property type="match status" value="1"/>
</dbReference>
<dbReference type="FunFam" id="3.40.30.10:FF:000118">
    <property type="entry name" value="Peroxiredoxin AhpE"/>
    <property type="match status" value="1"/>
</dbReference>
<dbReference type="Gene3D" id="3.40.30.10">
    <property type="entry name" value="Glutaredoxin"/>
    <property type="match status" value="1"/>
</dbReference>
<dbReference type="InterPro" id="IPR000866">
    <property type="entry name" value="AhpC/TSA"/>
</dbReference>
<dbReference type="InterPro" id="IPR024706">
    <property type="entry name" value="Peroxiredoxin_AhpC-typ"/>
</dbReference>
<dbReference type="InterPro" id="IPR036249">
    <property type="entry name" value="Thioredoxin-like_sf"/>
</dbReference>
<dbReference type="InterPro" id="IPR013766">
    <property type="entry name" value="Thioredoxin_domain"/>
</dbReference>
<dbReference type="InterPro" id="IPR050455">
    <property type="entry name" value="Tpx_Peroxidase_subfamily"/>
</dbReference>
<dbReference type="PANTHER" id="PTHR43110">
    <property type="entry name" value="THIOL PEROXIDASE"/>
    <property type="match status" value="1"/>
</dbReference>
<dbReference type="PANTHER" id="PTHR43110:SF1">
    <property type="entry name" value="THIOL PEROXIDASE"/>
    <property type="match status" value="1"/>
</dbReference>
<dbReference type="Pfam" id="PF00578">
    <property type="entry name" value="AhpC-TSA"/>
    <property type="match status" value="1"/>
</dbReference>
<dbReference type="PIRSF" id="PIRSF000239">
    <property type="entry name" value="AHPC"/>
    <property type="match status" value="1"/>
</dbReference>
<dbReference type="SUPFAM" id="SSF52833">
    <property type="entry name" value="Thioredoxin-like"/>
    <property type="match status" value="1"/>
</dbReference>
<dbReference type="PROSITE" id="PS51352">
    <property type="entry name" value="THIOREDOXIN_2"/>
    <property type="match status" value="1"/>
</dbReference>
<gene>
    <name type="primary">ahpE</name>
    <name type="ordered locus">Rv2238c</name>
    <name type="ORF">MTCY427.19c</name>
</gene>
<evidence type="ECO:0000255" key="1">
    <source>
        <dbReference type="PROSITE-ProRule" id="PRU00691"/>
    </source>
</evidence>
<evidence type="ECO:0000269" key="2">
    <source>
    </source>
</evidence>
<evidence type="ECO:0000269" key="3">
    <source>
    </source>
</evidence>
<evidence type="ECO:0000269" key="4">
    <source>
    </source>
</evidence>
<evidence type="ECO:0000269" key="5">
    <source>
    </source>
</evidence>
<evidence type="ECO:0000305" key="6"/>
<evidence type="ECO:0000305" key="7">
    <source>
    </source>
</evidence>
<evidence type="ECO:0000305" key="8">
    <source>
    </source>
</evidence>
<evidence type="ECO:0000305" key="9">
    <source>
    </source>
</evidence>
<evidence type="ECO:0007744" key="10">
    <source>
        <dbReference type="PDB" id="1XVW"/>
    </source>
</evidence>
<evidence type="ECO:0007829" key="11">
    <source>
        <dbReference type="PDB" id="5C04"/>
    </source>
</evidence>
<evidence type="ECO:0007829" key="12">
    <source>
        <dbReference type="PDB" id="5ID2"/>
    </source>
</evidence>
<sequence>MLNVGATAPDFTLRDQNQQLVTLRGYRGAKNVLLVFFPLAFTGICQGELDQLRDHLPEFENDDSAALAISVGPPPTHKIWATQSGFTFPLLSDFWPHGAVSQAYGVFNEQAGIANRGTFVVDRSGIIRFAEMKQPGEVRDQRLWTDALAALTA</sequence>
<reference key="1">
    <citation type="journal article" date="1998" name="Nature">
        <title>Deciphering the biology of Mycobacterium tuberculosis from the complete genome sequence.</title>
        <authorList>
            <person name="Cole S.T."/>
            <person name="Brosch R."/>
            <person name="Parkhill J."/>
            <person name="Garnier T."/>
            <person name="Churcher C.M."/>
            <person name="Harris D.E."/>
            <person name="Gordon S.V."/>
            <person name="Eiglmeier K."/>
            <person name="Gas S."/>
            <person name="Barry C.E. III"/>
            <person name="Tekaia F."/>
            <person name="Badcock K."/>
            <person name="Basham D."/>
            <person name="Brown D."/>
            <person name="Chillingworth T."/>
            <person name="Connor R."/>
            <person name="Davies R.M."/>
            <person name="Devlin K."/>
            <person name="Feltwell T."/>
            <person name="Gentles S."/>
            <person name="Hamlin N."/>
            <person name="Holroyd S."/>
            <person name="Hornsby T."/>
            <person name="Jagels K."/>
            <person name="Krogh A."/>
            <person name="McLean J."/>
            <person name="Moule S."/>
            <person name="Murphy L.D."/>
            <person name="Oliver S."/>
            <person name="Osborne J."/>
            <person name="Quail M.A."/>
            <person name="Rajandream M.A."/>
            <person name="Rogers J."/>
            <person name="Rutter S."/>
            <person name="Seeger K."/>
            <person name="Skelton S."/>
            <person name="Squares S."/>
            <person name="Squares R."/>
            <person name="Sulston J.E."/>
            <person name="Taylor K."/>
            <person name="Whitehead S."/>
            <person name="Barrell B.G."/>
        </authorList>
    </citation>
    <scope>NUCLEOTIDE SEQUENCE [LARGE SCALE GENOMIC DNA]</scope>
    <source>
        <strain>ATCC 25618 / H37Rv</strain>
    </source>
</reference>
<reference key="2">
    <citation type="journal article" date="2009" name="Biochemistry">
        <title>Thiol and sulfenic acid oxidation of AhpE, the one-cysteine peroxiredoxin from Mycobacterium tuberculosis: kinetics, acidity constants, and conformational dynamics.</title>
        <authorList>
            <person name="Hugo M."/>
            <person name="Turell L."/>
            <person name="Manta B."/>
            <person name="Botti H."/>
            <person name="Monteiro G."/>
            <person name="Netto L.E."/>
            <person name="Alvarez B."/>
            <person name="Radi R."/>
            <person name="Trujillo M."/>
        </authorList>
    </citation>
    <scope>FUNCTION</scope>
    <scope>CATALYTIC ACTIVITY</scope>
    <scope>ACTIVE SITE</scope>
    <scope>SUBUNIT</scope>
</reference>
<reference key="3">
    <citation type="journal article" date="2011" name="Mol. Cell. Proteomics">
        <title>Proteogenomic analysis of Mycobacterium tuberculosis by high resolution mass spectrometry.</title>
        <authorList>
            <person name="Kelkar D.S."/>
            <person name="Kumar D."/>
            <person name="Kumar P."/>
            <person name="Balakrishnan L."/>
            <person name="Muthusamy B."/>
            <person name="Yadav A.K."/>
            <person name="Shrivastava P."/>
            <person name="Marimuthu A."/>
            <person name="Anand S."/>
            <person name="Sundaram H."/>
            <person name="Kingsbury R."/>
            <person name="Harsha H.C."/>
            <person name="Nair B."/>
            <person name="Prasad T.S."/>
            <person name="Chauhan D.S."/>
            <person name="Katoch K."/>
            <person name="Katoch V.M."/>
            <person name="Kumar P."/>
            <person name="Chaerkady R."/>
            <person name="Ramachandran S."/>
            <person name="Dash D."/>
            <person name="Pandey A."/>
        </authorList>
    </citation>
    <scope>IDENTIFICATION BY MASS SPECTROMETRY [LARGE SCALE ANALYSIS]</scope>
    <source>
        <strain>ATCC 25618 / H37Rv</strain>
    </source>
</reference>
<reference key="4">
    <citation type="journal article" date="2014" name="J. Biol. Chem.">
        <title>Mycothiol/mycoredoxin 1-dependent reduction of the peroxiredoxin AhpE from Mycobacterium tuberculosis.</title>
        <authorList>
            <person name="Hugo M."/>
            <person name="Van Laer K."/>
            <person name="Reyes A.M."/>
            <person name="Vertommen D."/>
            <person name="Messens J."/>
            <person name="Radi R."/>
            <person name="Trujillo M."/>
        </authorList>
    </citation>
    <scope>FUNCTION</scope>
</reference>
<reference key="5">
    <citation type="journal article" date="2005" name="J. Mol. Biol.">
        <title>Crystal Structure of AhpE from Mycobacterium tuberculosis, a 1-Cys peroxiredoxin.</title>
        <authorList>
            <person name="Li S."/>
            <person name="Peterson N.A."/>
            <person name="Kim M.Y."/>
            <person name="Kim C.Y."/>
            <person name="Hung L.W."/>
            <person name="Yu M."/>
            <person name="Lekin T."/>
            <person name="Segelke B.W."/>
            <person name="Lott J.S."/>
            <person name="Baker E.N."/>
        </authorList>
    </citation>
    <scope>X-RAY CRYSTALLOGRAPHY (1.90 ANGSTROMS)</scope>
    <scope>ACTIVE SITE</scope>
</reference>
<reference key="6">
    <citation type="journal article" date="2016" name="Chem. Commun. (Camb.)">
        <title>The active site architecture in peroxiredoxins: a case study on Mycobacterium tuberculosis AhpE.</title>
        <authorList>
            <person name="Pedre B."/>
            <person name="van Bergen L.A."/>
            <person name="Pallo A."/>
            <person name="Rosado L.A."/>
            <person name="Dufe V.T."/>
            <person name="Molle I.V."/>
            <person name="Wahni K."/>
            <person name="Erdogan H."/>
            <person name="Alonso M."/>
            <person name="Proft F.D."/>
            <person name="Messens J."/>
        </authorList>
    </citation>
    <scope>X-RAY CRYSTALLOGRAPHY (1.45 ANGSTROMS) OF 1-152</scope>
</reference>
<reference key="7">
    <citation type="journal article" date="2016" name="Free Radic. Biol. Med.">
        <title>Redox chemistry of Mycobacterium tuberculosis alkylhydroperoxide reductase E (AhpE): Structural and mechanistic insight into a mycoredoxin-1 independent reductive pathway of AhpE via mycothiol.</title>
        <authorList>
            <person name="Kumar A."/>
            <person name="Balakrishna A.M."/>
            <person name="Nartey W."/>
            <person name="Manimekalai M.S."/>
            <person name="Grueber G."/>
        </authorList>
    </citation>
    <scope>X-RAY CRYSTALLOGRAPHY (2.43 ANGSTROMS)</scope>
    <scope>SUBUNIT</scope>
</reference>
<reference key="8">
    <citation type="journal article" date="2016" name="Sci. Rep.">
        <title>Revisiting sulfur H-bonds in proteins: The example of peroxiredoxin AhpE.</title>
        <authorList>
            <person name="van Bergen L.A."/>
            <person name="Alonso M."/>
            <person name="Pallo A."/>
            <person name="Nilsson L."/>
            <person name="De Proft F."/>
            <person name="Messens J."/>
        </authorList>
    </citation>
    <scope>X-RAY CRYSTALLOGRAPHY (1.87 ANGSTROMS) OF 1-152</scope>
</reference>
<feature type="chain" id="PRO_0000135148" description="Alkyl hydroperoxide reductase E">
    <location>
        <begin position="1"/>
        <end position="153"/>
    </location>
</feature>
<feature type="domain" description="Thioredoxin" evidence="1">
    <location>
        <begin position="2"/>
        <end position="153"/>
    </location>
</feature>
<feature type="active site" description="Cysteine sulfenic acid (-SOH) intermediate" evidence="2 7 10">
    <location>
        <position position="45"/>
    </location>
</feature>
<feature type="strand" evidence="11">
    <location>
        <begin position="12"/>
        <end position="15"/>
    </location>
</feature>
<feature type="strand" evidence="11">
    <location>
        <begin position="20"/>
        <end position="23"/>
    </location>
</feature>
<feature type="helix" evidence="11">
    <location>
        <begin position="24"/>
        <end position="26"/>
    </location>
</feature>
<feature type="turn" evidence="11">
    <location>
        <begin position="27"/>
        <end position="29"/>
    </location>
</feature>
<feature type="strand" evidence="11">
    <location>
        <begin position="31"/>
        <end position="36"/>
    </location>
</feature>
<feature type="helix" evidence="11">
    <location>
        <begin position="43"/>
        <end position="54"/>
    </location>
</feature>
<feature type="helix" evidence="11">
    <location>
        <begin position="55"/>
        <end position="58"/>
    </location>
</feature>
<feature type="strand" evidence="11">
    <location>
        <begin position="60"/>
        <end position="71"/>
    </location>
</feature>
<feature type="helix" evidence="11">
    <location>
        <begin position="74"/>
        <end position="84"/>
    </location>
</feature>
<feature type="strand" evidence="11">
    <location>
        <begin position="90"/>
        <end position="92"/>
    </location>
</feature>
<feature type="turn" evidence="11">
    <location>
        <begin position="94"/>
        <end position="98"/>
    </location>
</feature>
<feature type="helix" evidence="11">
    <location>
        <begin position="99"/>
        <end position="103"/>
    </location>
</feature>
<feature type="turn" evidence="11">
    <location>
        <begin position="109"/>
        <end position="112"/>
    </location>
</feature>
<feature type="strand" evidence="11">
    <location>
        <begin position="116"/>
        <end position="121"/>
    </location>
</feature>
<feature type="strand" evidence="11">
    <location>
        <begin position="125"/>
        <end position="133"/>
    </location>
</feature>
<feature type="helix" evidence="11">
    <location>
        <begin position="142"/>
        <end position="149"/>
    </location>
</feature>
<feature type="turn" evidence="12">
    <location>
        <begin position="150"/>
        <end position="152"/>
    </location>
</feature>
<accession>P9WIE3</accession>
<accession>L0TAL3</accession>
<accession>P65688</accession>
<accession>Q10520</accession>
<keyword id="KW-0002">3D-structure</keyword>
<keyword id="KW-0049">Antioxidant</keyword>
<keyword id="KW-0560">Oxidoreductase</keyword>
<keyword id="KW-0575">Peroxidase</keyword>
<keyword id="KW-0676">Redox-active center</keyword>
<keyword id="KW-1185">Reference proteome</keyword>
<proteinExistence type="evidence at protein level"/>